<dbReference type="EC" id="2.5.1.-" evidence="1"/>
<dbReference type="EMBL" id="AE008917">
    <property type="protein sequence ID" value="AAL52008.1"/>
    <property type="molecule type" value="Genomic_DNA"/>
</dbReference>
<dbReference type="PIR" id="AE3355">
    <property type="entry name" value="AE3355"/>
</dbReference>
<dbReference type="RefSeq" id="WP_002964285.1">
    <property type="nucleotide sequence ID" value="NZ_GG703780.1"/>
</dbReference>
<dbReference type="SMR" id="Q8YHH3"/>
<dbReference type="KEGG" id="bme:BMEI0827"/>
<dbReference type="KEGG" id="bmel:DK63_593"/>
<dbReference type="PATRIC" id="fig|224914.52.peg.618"/>
<dbReference type="eggNOG" id="COG0020">
    <property type="taxonomic scope" value="Bacteria"/>
</dbReference>
<dbReference type="PhylomeDB" id="Q8YHH3"/>
<dbReference type="PRO" id="PR:Q8YHH3"/>
<dbReference type="Proteomes" id="UP000000419">
    <property type="component" value="Chromosome I"/>
</dbReference>
<dbReference type="GO" id="GO:0005829">
    <property type="term" value="C:cytosol"/>
    <property type="evidence" value="ECO:0007669"/>
    <property type="project" value="TreeGrafter"/>
</dbReference>
<dbReference type="GO" id="GO:0008834">
    <property type="term" value="F:ditrans,polycis-undecaprenyl-diphosphate synthase [(2E,6E)-farnesyl-diphosphate specific] activity"/>
    <property type="evidence" value="ECO:0007669"/>
    <property type="project" value="TreeGrafter"/>
</dbReference>
<dbReference type="GO" id="GO:0000287">
    <property type="term" value="F:magnesium ion binding"/>
    <property type="evidence" value="ECO:0007669"/>
    <property type="project" value="UniProtKB-UniRule"/>
</dbReference>
<dbReference type="GO" id="GO:0016094">
    <property type="term" value="P:polyprenol biosynthetic process"/>
    <property type="evidence" value="ECO:0007669"/>
    <property type="project" value="TreeGrafter"/>
</dbReference>
<dbReference type="CDD" id="cd00475">
    <property type="entry name" value="Cis_IPPS"/>
    <property type="match status" value="1"/>
</dbReference>
<dbReference type="FunFam" id="3.40.1180.10:FF:000001">
    <property type="entry name" value="(2E,6E)-farnesyl-diphosphate-specific ditrans,polycis-undecaprenyl-diphosphate synthase"/>
    <property type="match status" value="1"/>
</dbReference>
<dbReference type="Gene3D" id="3.40.1180.10">
    <property type="entry name" value="Decaprenyl diphosphate synthase-like"/>
    <property type="match status" value="1"/>
</dbReference>
<dbReference type="HAMAP" id="MF_01139">
    <property type="entry name" value="ISPT"/>
    <property type="match status" value="1"/>
</dbReference>
<dbReference type="InterPro" id="IPR001441">
    <property type="entry name" value="UPP_synth-like"/>
</dbReference>
<dbReference type="InterPro" id="IPR018520">
    <property type="entry name" value="UPP_synth-like_CS"/>
</dbReference>
<dbReference type="InterPro" id="IPR036424">
    <property type="entry name" value="UPP_synth-like_sf"/>
</dbReference>
<dbReference type="NCBIfam" id="NF011405">
    <property type="entry name" value="PRK14830.1"/>
    <property type="match status" value="1"/>
</dbReference>
<dbReference type="NCBIfam" id="NF011408">
    <property type="entry name" value="PRK14834.1"/>
    <property type="match status" value="1"/>
</dbReference>
<dbReference type="NCBIfam" id="TIGR00055">
    <property type="entry name" value="uppS"/>
    <property type="match status" value="1"/>
</dbReference>
<dbReference type="PANTHER" id="PTHR10291:SF0">
    <property type="entry name" value="DEHYDRODOLICHYL DIPHOSPHATE SYNTHASE 2"/>
    <property type="match status" value="1"/>
</dbReference>
<dbReference type="PANTHER" id="PTHR10291">
    <property type="entry name" value="DEHYDRODOLICHYL DIPHOSPHATE SYNTHASE FAMILY MEMBER"/>
    <property type="match status" value="1"/>
</dbReference>
<dbReference type="Pfam" id="PF01255">
    <property type="entry name" value="Prenyltransf"/>
    <property type="match status" value="1"/>
</dbReference>
<dbReference type="SUPFAM" id="SSF64005">
    <property type="entry name" value="Undecaprenyl diphosphate synthase"/>
    <property type="match status" value="1"/>
</dbReference>
<dbReference type="PROSITE" id="PS01066">
    <property type="entry name" value="UPP_SYNTHASE"/>
    <property type="match status" value="1"/>
</dbReference>
<proteinExistence type="inferred from homology"/>
<sequence>MSDPRHIAIIMDGNGRWAKARGLPRSAGHRAGVEALREIVRAAGDRGLGYLTLFAFSSENWTRPSGEVSDLLGLLKLFIRRDLAELHRNNVRVNIIGERAELAANIRALLNEAESLTHRNTGLNLVIAFNYGSRDEIVRAVRSLARDVAAGLLDPSSISAELVSANLDTAGIPDPDLIIRTSGEMRLSNFLLWQAAYSEFLFLPCHWPDFRPADLDAAYETFRQRERRFGGVEPRASADAEEEILCPSTKGAAV</sequence>
<feature type="chain" id="PRO_0000123582" description="Isoprenyl transferase">
    <location>
        <begin position="1"/>
        <end position="254"/>
    </location>
</feature>
<feature type="active site" evidence="1">
    <location>
        <position position="12"/>
    </location>
</feature>
<feature type="active site" description="Proton acceptor" evidence="1">
    <location>
        <position position="60"/>
    </location>
</feature>
<feature type="binding site" evidence="1">
    <location>
        <position position="12"/>
    </location>
    <ligand>
        <name>Mg(2+)</name>
        <dbReference type="ChEBI" id="CHEBI:18420"/>
    </ligand>
</feature>
<feature type="binding site" evidence="1">
    <location>
        <begin position="13"/>
        <end position="16"/>
    </location>
    <ligand>
        <name>substrate</name>
    </ligand>
</feature>
<feature type="binding site" evidence="1">
    <location>
        <position position="17"/>
    </location>
    <ligand>
        <name>substrate</name>
    </ligand>
</feature>
<feature type="binding site" evidence="1">
    <location>
        <position position="25"/>
    </location>
    <ligand>
        <name>substrate</name>
    </ligand>
</feature>
<feature type="binding site" evidence="1">
    <location>
        <position position="29"/>
    </location>
    <ligand>
        <name>substrate</name>
    </ligand>
</feature>
<feature type="binding site" evidence="1">
    <location>
        <begin position="57"/>
        <end position="59"/>
    </location>
    <ligand>
        <name>substrate</name>
    </ligand>
</feature>
<feature type="binding site" evidence="1">
    <location>
        <position position="61"/>
    </location>
    <ligand>
        <name>substrate</name>
    </ligand>
</feature>
<feature type="binding site" evidence="1">
    <location>
        <position position="63"/>
    </location>
    <ligand>
        <name>substrate</name>
    </ligand>
</feature>
<feature type="binding site" evidence="1">
    <location>
        <position position="180"/>
    </location>
    <ligand>
        <name>substrate</name>
    </ligand>
</feature>
<feature type="binding site" evidence="1">
    <location>
        <begin position="186"/>
        <end position="188"/>
    </location>
    <ligand>
        <name>substrate</name>
    </ligand>
</feature>
<feature type="binding site" evidence="1">
    <location>
        <position position="199"/>
    </location>
    <ligand>
        <name>Mg(2+)</name>
        <dbReference type="ChEBI" id="CHEBI:18420"/>
    </ligand>
</feature>
<organism>
    <name type="scientific">Brucella melitensis biotype 1 (strain ATCC 23456 / CCUG 17765 / NCTC 10094 / 16M)</name>
    <dbReference type="NCBI Taxonomy" id="224914"/>
    <lineage>
        <taxon>Bacteria</taxon>
        <taxon>Pseudomonadati</taxon>
        <taxon>Pseudomonadota</taxon>
        <taxon>Alphaproteobacteria</taxon>
        <taxon>Hyphomicrobiales</taxon>
        <taxon>Brucellaceae</taxon>
        <taxon>Brucella/Ochrobactrum group</taxon>
        <taxon>Brucella</taxon>
    </lineage>
</organism>
<protein>
    <recommendedName>
        <fullName evidence="1">Isoprenyl transferase</fullName>
        <ecNumber evidence="1">2.5.1.-</ecNumber>
    </recommendedName>
</protein>
<evidence type="ECO:0000255" key="1">
    <source>
        <dbReference type="HAMAP-Rule" id="MF_01139"/>
    </source>
</evidence>
<reference key="1">
    <citation type="journal article" date="2002" name="Proc. Natl. Acad. Sci. U.S.A.">
        <title>The genome sequence of the facultative intracellular pathogen Brucella melitensis.</title>
        <authorList>
            <person name="DelVecchio V.G."/>
            <person name="Kapatral V."/>
            <person name="Redkar R.J."/>
            <person name="Patra G."/>
            <person name="Mujer C."/>
            <person name="Los T."/>
            <person name="Ivanova N."/>
            <person name="Anderson I."/>
            <person name="Bhattacharyya A."/>
            <person name="Lykidis A."/>
            <person name="Reznik G."/>
            <person name="Jablonski L."/>
            <person name="Larsen N."/>
            <person name="D'Souza M."/>
            <person name="Bernal A."/>
            <person name="Mazur M."/>
            <person name="Goltsman E."/>
            <person name="Selkov E."/>
            <person name="Elzer P.H."/>
            <person name="Hagius S."/>
            <person name="O'Callaghan D."/>
            <person name="Letesson J.-J."/>
            <person name="Haselkorn R."/>
            <person name="Kyrpides N.C."/>
            <person name="Overbeek R."/>
        </authorList>
    </citation>
    <scope>NUCLEOTIDE SEQUENCE [LARGE SCALE GENOMIC DNA]</scope>
    <source>
        <strain>ATCC 23456 / CCUG 17765 / NCTC 10094 / 16M</strain>
    </source>
</reference>
<accession>Q8YHH3</accession>
<name>ISPT_BRUME</name>
<gene>
    <name evidence="1" type="primary">uppS</name>
    <name type="ordered locus">BMEI0827</name>
</gene>
<keyword id="KW-0460">Magnesium</keyword>
<keyword id="KW-0479">Metal-binding</keyword>
<keyword id="KW-0808">Transferase</keyword>
<comment type="function">
    <text evidence="1">Catalyzes the condensation of isopentenyl diphosphate (IPP) with allylic pyrophosphates generating different type of terpenoids.</text>
</comment>
<comment type="cofactor">
    <cofactor evidence="1">
        <name>Mg(2+)</name>
        <dbReference type="ChEBI" id="CHEBI:18420"/>
    </cofactor>
    <text evidence="1">Binds 2 magnesium ions per subunit.</text>
</comment>
<comment type="subunit">
    <text evidence="1">Homodimer.</text>
</comment>
<comment type="similarity">
    <text evidence="1">Belongs to the UPP synthase family.</text>
</comment>